<evidence type="ECO:0000255" key="1"/>
<evidence type="ECO:0000305" key="2"/>
<proteinExistence type="inferred from homology"/>
<gene>
    <name type="primary">RL13</name>
</gene>
<keyword id="KW-0472">Membrane</keyword>
<keyword id="KW-1185">Reference proteome</keyword>
<keyword id="KW-0732">Signal</keyword>
<keyword id="KW-0812">Transmembrane</keyword>
<keyword id="KW-1133">Transmembrane helix</keyword>
<keyword id="KW-0261">Viral envelope protein</keyword>
<keyword id="KW-0946">Virion</keyword>
<reference key="1">
    <citation type="journal article" date="2004" name="J. Gen. Virol.">
        <title>Genetic content of wild-type human cytomegalovirus.</title>
        <authorList>
            <person name="Dolan A."/>
            <person name="Cunningham C."/>
            <person name="Hector R.D."/>
            <person name="Hassan-Walker A.F."/>
            <person name="Lee L."/>
            <person name="Addison C."/>
            <person name="Dargan D.J."/>
            <person name="McGeoch D.J."/>
            <person name="Gatherer D."/>
            <person name="Emery V.C."/>
            <person name="Griffiths P.D."/>
            <person name="Sinzger C."/>
            <person name="McSharry B.P."/>
            <person name="Wilkinson G.W.G."/>
            <person name="Davison A.J."/>
        </authorList>
    </citation>
    <scope>NUCLEOTIDE SEQUENCE [LARGE SCALE GENOMIC DNA]</scope>
</reference>
<reference key="2">
    <citation type="journal article" date="2010" name="J. Clin. Invest.">
        <title>Reconstruction of the complete human cytomegalovirus genome in a BAC reveals RL13 to be a potent inhibitor of replication.</title>
        <authorList>
            <person name="Stanton R.J."/>
            <person name="Baluchova K."/>
            <person name="Dargan D.J."/>
            <person name="Cunningham C."/>
            <person name="Sheehy O."/>
            <person name="Seirafian S."/>
            <person name="McSharry B.P."/>
            <person name="Neale M.L."/>
            <person name="Davies J.A."/>
            <person name="Tomasec P."/>
            <person name="Davison A.J."/>
            <person name="Wilkinson G.W."/>
        </authorList>
    </citation>
    <scope>SUBCELLULAR LOCATION</scope>
</reference>
<dbReference type="EMBL" id="AY446894">
    <property type="protein sequence ID" value="AAR31567.1"/>
    <property type="molecule type" value="Genomic_DNA"/>
</dbReference>
<dbReference type="RefSeq" id="YP_081461.1">
    <property type="nucleotide sequence ID" value="NC_006273.2"/>
</dbReference>
<dbReference type="DNASU" id="3077492"/>
<dbReference type="GeneID" id="3077492"/>
<dbReference type="KEGG" id="vg:3077492"/>
<dbReference type="Proteomes" id="UP000000938">
    <property type="component" value="Segment"/>
</dbReference>
<dbReference type="GO" id="GO:0016020">
    <property type="term" value="C:membrane"/>
    <property type="evidence" value="ECO:0007669"/>
    <property type="project" value="UniProtKB-KW"/>
</dbReference>
<dbReference type="GO" id="GO:0019031">
    <property type="term" value="C:viral envelope"/>
    <property type="evidence" value="ECO:0007669"/>
    <property type="project" value="UniProtKB-KW"/>
</dbReference>
<dbReference type="GO" id="GO:0055036">
    <property type="term" value="C:virion membrane"/>
    <property type="evidence" value="ECO:0007669"/>
    <property type="project" value="UniProtKB-SubCell"/>
</dbReference>
<dbReference type="Gene3D" id="2.60.40.10">
    <property type="entry name" value="Immunoglobulins"/>
    <property type="match status" value="1"/>
</dbReference>
<dbReference type="InterPro" id="IPR036179">
    <property type="entry name" value="Ig-like_dom_sf"/>
</dbReference>
<dbReference type="InterPro" id="IPR013783">
    <property type="entry name" value="Ig-like_fold"/>
</dbReference>
<dbReference type="InterPro" id="IPR003599">
    <property type="entry name" value="Ig_sub"/>
</dbReference>
<dbReference type="SMART" id="SM00409">
    <property type="entry name" value="IG"/>
    <property type="match status" value="1"/>
</dbReference>
<dbReference type="SUPFAM" id="SSF48726">
    <property type="entry name" value="Immunoglobulin"/>
    <property type="match status" value="1"/>
</dbReference>
<comment type="function">
    <text>May play a role in modifying tropism or in modulating cell signaling during virus entry. Since RL13 expression severely impairs HCMV replication in epithelial cell cultures, it may act as a regulator promoting persistence by suppressing the switch to fully lytic infection.</text>
</comment>
<comment type="subcellular location">
    <subcellularLocation>
        <location evidence="2">Virion membrane</location>
        <topology evidence="2">Single-pass type I membrane protein</topology>
    </subcellularLocation>
</comment>
<accession>Q6SWC9</accession>
<accession>D2K3H1</accession>
<organism>
    <name type="scientific">Human cytomegalovirus (strain Merlin)</name>
    <name type="common">HHV-5</name>
    <name type="synonym">Human herpesvirus 5</name>
    <dbReference type="NCBI Taxonomy" id="295027"/>
    <lineage>
        <taxon>Viruses</taxon>
        <taxon>Duplodnaviria</taxon>
        <taxon>Heunggongvirae</taxon>
        <taxon>Peploviricota</taxon>
        <taxon>Herviviricetes</taxon>
        <taxon>Herpesvirales</taxon>
        <taxon>Orthoherpesviridae</taxon>
        <taxon>Betaherpesvirinae</taxon>
        <taxon>Cytomegalovirus</taxon>
        <taxon>Cytomegalovirus humanbeta5</taxon>
        <taxon>Human cytomegalovirus</taxon>
    </lineage>
</organism>
<protein>
    <recommendedName>
        <fullName>Membrane protein RL13</fullName>
    </recommendedName>
</protein>
<organismHost>
    <name type="scientific">Homo sapiens</name>
    <name type="common">Human</name>
    <dbReference type="NCBI Taxonomy" id="9606"/>
</organismHost>
<sequence>MHWHLAITWTVIILTFSECYNQTCPCPCICVNSTTVSISTSETTSKNITPTTTTNSKKTTSSIATTTPSLVTTGKVVSTAASSTIISQTNRSHTSNAITTPKTRFEYNITGYVGQEVTLNFTGSWNYIQWFRYGSPGWLYSSEPICTVTSNYHHTFPRGALCFDCDMTKLLIYDLTLNDSGKYVVKRTRHDNQYEEACYSLTVIFANTTSIVTNRTCDRKRTENTDTTNHEIGKHIIETIKKANIPLGIHAVWAGIVVSVALIALYMGNRRRPRKPRYTRLPKYDPDESWTKT</sequence>
<name>RL13_HCMVM</name>
<feature type="signal peptide" evidence="1">
    <location>
        <begin position="1"/>
        <end position="19"/>
    </location>
</feature>
<feature type="chain" id="PRO_0000417862" description="Membrane protein RL13">
    <location>
        <begin position="20"/>
        <end position="293"/>
    </location>
</feature>
<feature type="transmembrane region" description="Helical" evidence="1">
    <location>
        <begin position="245"/>
        <end position="265"/>
    </location>
</feature>